<evidence type="ECO:0000255" key="1"/>
<evidence type="ECO:0000269" key="2">
    <source>
    </source>
</evidence>
<name>UIP5_YEAST</name>
<feature type="signal peptide" evidence="1">
    <location>
        <begin position="1"/>
        <end position="27"/>
    </location>
</feature>
<feature type="chain" id="PRO_0000203212" description="Protein UIP5">
    <location>
        <begin position="28"/>
        <end position="443"/>
    </location>
</feature>
<feature type="topological domain" description="Perinuclear space" evidence="1">
    <location>
        <begin position="28"/>
        <end position="398"/>
    </location>
</feature>
<feature type="transmembrane region" description="Helical" evidence="1">
    <location>
        <begin position="399"/>
        <end position="420"/>
    </location>
</feature>
<feature type="topological domain" description="Cytoplasmic" evidence="1">
    <location>
        <begin position="421"/>
        <end position="443"/>
    </location>
</feature>
<comment type="subcellular location">
    <subcellularLocation>
        <location>Nucleus membrane</location>
        <topology>Single-pass type I membrane protein</topology>
    </subcellularLocation>
</comment>
<comment type="miscellaneous">
    <text evidence="2">Present with 319 molecules/cell in log phase SD medium.</text>
</comment>
<gene>
    <name type="primary">UIP5</name>
    <name type="ordered locus">YKR044W</name>
</gene>
<dbReference type="EMBL" id="Z28269">
    <property type="protein sequence ID" value="CAA82120.1"/>
    <property type="molecule type" value="Genomic_DNA"/>
</dbReference>
<dbReference type="EMBL" id="AY723841">
    <property type="protein sequence ID" value="AAU09758.1"/>
    <property type="molecule type" value="Genomic_DNA"/>
</dbReference>
<dbReference type="EMBL" id="BK006944">
    <property type="protein sequence ID" value="DAA09196.1"/>
    <property type="molecule type" value="Genomic_DNA"/>
</dbReference>
<dbReference type="PIR" id="S38116">
    <property type="entry name" value="S38116"/>
</dbReference>
<dbReference type="RefSeq" id="NP_012970.3">
    <property type="nucleotide sequence ID" value="NM_001179834.3"/>
</dbReference>
<dbReference type="SMR" id="P36137"/>
<dbReference type="BioGRID" id="34176">
    <property type="interactions" value="35"/>
</dbReference>
<dbReference type="DIP" id="DIP-4845N"/>
<dbReference type="FunCoup" id="P36137">
    <property type="interactions" value="27"/>
</dbReference>
<dbReference type="IntAct" id="P36137">
    <property type="interactions" value="1"/>
</dbReference>
<dbReference type="STRING" id="4932.YKR044W"/>
<dbReference type="iPTMnet" id="P36137"/>
<dbReference type="PaxDb" id="4932-YKR044W"/>
<dbReference type="PeptideAtlas" id="P36137"/>
<dbReference type="EnsemblFungi" id="YKR044W_mRNA">
    <property type="protein sequence ID" value="YKR044W"/>
    <property type="gene ID" value="YKR044W"/>
</dbReference>
<dbReference type="GeneID" id="853918"/>
<dbReference type="KEGG" id="sce:YKR044W"/>
<dbReference type="AGR" id="SGD:S000001752"/>
<dbReference type="SGD" id="S000001752">
    <property type="gene designation" value="UIP5"/>
</dbReference>
<dbReference type="VEuPathDB" id="FungiDB:YKR044W"/>
<dbReference type="eggNOG" id="ENOG502QVEK">
    <property type="taxonomic scope" value="Eukaryota"/>
</dbReference>
<dbReference type="GeneTree" id="ENSGT00940000171755"/>
<dbReference type="HOGENOM" id="CLU_050744_0_0_1"/>
<dbReference type="InParanoid" id="P36137"/>
<dbReference type="OMA" id="MGFPKNL"/>
<dbReference type="OrthoDB" id="270293at2759"/>
<dbReference type="BioCyc" id="YEAST:G3O-32015-MONOMER"/>
<dbReference type="Reactome" id="R-SCE-9013106">
    <property type="pathway name" value="RHOC GTPase cycle"/>
</dbReference>
<dbReference type="BioGRID-ORCS" id="853918">
    <property type="hits" value="2 hits in 10 CRISPR screens"/>
</dbReference>
<dbReference type="PRO" id="PR:P36137"/>
<dbReference type="Proteomes" id="UP000002311">
    <property type="component" value="Chromosome XI"/>
</dbReference>
<dbReference type="RNAct" id="P36137">
    <property type="molecule type" value="protein"/>
</dbReference>
<dbReference type="GO" id="GO:0030134">
    <property type="term" value="C:COPII-coated ER to Golgi transport vesicle"/>
    <property type="evidence" value="ECO:0000318"/>
    <property type="project" value="GO_Central"/>
</dbReference>
<dbReference type="GO" id="GO:0005789">
    <property type="term" value="C:endoplasmic reticulum membrane"/>
    <property type="evidence" value="ECO:0000318"/>
    <property type="project" value="GO_Central"/>
</dbReference>
<dbReference type="GO" id="GO:0005793">
    <property type="term" value="C:endoplasmic reticulum-Golgi intermediate compartment"/>
    <property type="evidence" value="ECO:0000318"/>
    <property type="project" value="GO_Central"/>
</dbReference>
<dbReference type="GO" id="GO:0000324">
    <property type="term" value="C:fungal-type vacuole"/>
    <property type="evidence" value="ECO:0007005"/>
    <property type="project" value="SGD"/>
</dbReference>
<dbReference type="GO" id="GO:0000139">
    <property type="term" value="C:Golgi membrane"/>
    <property type="evidence" value="ECO:0000318"/>
    <property type="project" value="GO_Central"/>
</dbReference>
<dbReference type="GO" id="GO:0005635">
    <property type="term" value="C:nuclear envelope"/>
    <property type="evidence" value="ECO:0000314"/>
    <property type="project" value="SGD"/>
</dbReference>
<dbReference type="GO" id="GO:0031965">
    <property type="term" value="C:nuclear membrane"/>
    <property type="evidence" value="ECO:0007669"/>
    <property type="project" value="UniProtKB-SubCell"/>
</dbReference>
<dbReference type="GO" id="GO:0005537">
    <property type="term" value="F:D-mannose binding"/>
    <property type="evidence" value="ECO:0000318"/>
    <property type="project" value="GO_Central"/>
</dbReference>
<dbReference type="GO" id="GO:0006888">
    <property type="term" value="P:endoplasmic reticulum to Golgi vesicle-mediated transport"/>
    <property type="evidence" value="ECO:0000318"/>
    <property type="project" value="GO_Central"/>
</dbReference>
<dbReference type="CDD" id="cd07308">
    <property type="entry name" value="lectin_leg-like"/>
    <property type="match status" value="1"/>
</dbReference>
<dbReference type="FunFam" id="2.60.120.200:FF:000274">
    <property type="entry name" value="Uip5p"/>
    <property type="match status" value="1"/>
</dbReference>
<dbReference type="Gene3D" id="2.60.120.200">
    <property type="match status" value="1"/>
</dbReference>
<dbReference type="InterPro" id="IPR013320">
    <property type="entry name" value="ConA-like_dom_sf"/>
</dbReference>
<dbReference type="InterPro" id="IPR051136">
    <property type="entry name" value="Intracellular_Lectin-GPT"/>
</dbReference>
<dbReference type="InterPro" id="IPR005052">
    <property type="entry name" value="Lectin_leg"/>
</dbReference>
<dbReference type="PANTHER" id="PTHR12223:SF45">
    <property type="entry name" value="RE50040P"/>
    <property type="match status" value="1"/>
</dbReference>
<dbReference type="PANTHER" id="PTHR12223">
    <property type="entry name" value="VESICULAR MANNOSE-BINDING LECTIN"/>
    <property type="match status" value="1"/>
</dbReference>
<dbReference type="Pfam" id="PF03388">
    <property type="entry name" value="Lectin_leg-like"/>
    <property type="match status" value="1"/>
</dbReference>
<dbReference type="SUPFAM" id="SSF49899">
    <property type="entry name" value="Concanavalin A-like lectins/glucanases"/>
    <property type="match status" value="1"/>
</dbReference>
<keyword id="KW-0472">Membrane</keyword>
<keyword id="KW-0539">Nucleus</keyword>
<keyword id="KW-1185">Reference proteome</keyword>
<keyword id="KW-0732">Signal</keyword>
<keyword id="KW-0812">Transmembrane</keyword>
<keyword id="KW-1133">Transmembrane helix</keyword>
<sequence length="443" mass="50981">MSRDVRAEKLAISLLILSLFLIFQLVAEIYLNNGDQYHTETSPFTRGRSHVTRVPNHDASLSIPFLDKINQFWHVGGATQIRNIQSIKLTQDRDQDKHGLVLSNGIGDNTINDFEIVFTFRISHDPTTQLTGDGMCFAITPENGFLTQNLQSSYAKKQYMMNSQGVIADNTDLMGFPKNLPGLFIVLDTYRNQGHDHKEVPFMDVFINVAPESDWYDINSDGELSTSLRLNSRGHIKLKKNALWNRVTKLRIIYLESISFLKIDVQYAKEGNYWIELFQTTENLYLPKNMHTGQRYIGCSALNGQLTETVELLDVSTSEFHWNDMDASIEDTYDYAKEAELFLEQEFGEVLDREPDEFTKWKMIKAQPNIKTGSQSAEQKTSNNPHSRLFKVVLTIWHYSEILLLIMGIYLFSACIRVFQRRFKKIRSRRKRAGSHSVGLLPM</sequence>
<reference key="1">
    <citation type="journal article" date="1994" name="Nature">
        <title>Complete DNA sequence of yeast chromosome XI.</title>
        <authorList>
            <person name="Dujon B."/>
            <person name="Alexandraki D."/>
            <person name="Andre B."/>
            <person name="Ansorge W."/>
            <person name="Baladron V."/>
            <person name="Ballesta J.P.G."/>
            <person name="Banrevi A."/>
            <person name="Bolle P.-A."/>
            <person name="Bolotin-Fukuhara M."/>
            <person name="Bossier P."/>
            <person name="Bou G."/>
            <person name="Boyer J."/>
            <person name="Buitrago M.J."/>
            <person name="Cheret G."/>
            <person name="Colleaux L."/>
            <person name="Daignan-Fornier B."/>
            <person name="del Rey F."/>
            <person name="Dion C."/>
            <person name="Domdey H."/>
            <person name="Duesterhoeft A."/>
            <person name="Duesterhus S."/>
            <person name="Entian K.-D."/>
            <person name="Erfle H."/>
            <person name="Esteban P.F."/>
            <person name="Feldmann H."/>
            <person name="Fernandes L."/>
            <person name="Fobo G.M."/>
            <person name="Fritz C."/>
            <person name="Fukuhara H."/>
            <person name="Gabel C."/>
            <person name="Gaillon L."/>
            <person name="Garcia-Cantalejo J.M."/>
            <person name="Garcia-Ramirez J.J."/>
            <person name="Gent M.E."/>
            <person name="Ghazvini M."/>
            <person name="Goffeau A."/>
            <person name="Gonzalez A."/>
            <person name="Grothues D."/>
            <person name="Guerreiro P."/>
            <person name="Hegemann J.H."/>
            <person name="Hewitt N."/>
            <person name="Hilger F."/>
            <person name="Hollenberg C.P."/>
            <person name="Horaitis O."/>
            <person name="Indge K.J."/>
            <person name="Jacquier A."/>
            <person name="James C.M."/>
            <person name="Jauniaux J.-C."/>
            <person name="Jimenez A."/>
            <person name="Keuchel H."/>
            <person name="Kirchrath L."/>
            <person name="Kleine K."/>
            <person name="Koetter P."/>
            <person name="Legrain P."/>
            <person name="Liebl S."/>
            <person name="Louis E.J."/>
            <person name="Maia e Silva A."/>
            <person name="Marck C."/>
            <person name="Monnier A.-L."/>
            <person name="Moestl D."/>
            <person name="Mueller S."/>
            <person name="Obermaier B."/>
            <person name="Oliver S.G."/>
            <person name="Pallier C."/>
            <person name="Pascolo S."/>
            <person name="Pfeiffer F."/>
            <person name="Philippsen P."/>
            <person name="Planta R.J."/>
            <person name="Pohl F.M."/>
            <person name="Pohl T.M."/>
            <person name="Poehlmann R."/>
            <person name="Portetelle D."/>
            <person name="Purnelle B."/>
            <person name="Puzos V."/>
            <person name="Ramezani Rad M."/>
            <person name="Rasmussen S.W."/>
            <person name="Remacha M.A."/>
            <person name="Revuelta J.L."/>
            <person name="Richard G.-F."/>
            <person name="Rieger M."/>
            <person name="Rodrigues-Pousada C."/>
            <person name="Rose M."/>
            <person name="Rupp T."/>
            <person name="Santos M.A."/>
            <person name="Schwager C."/>
            <person name="Sensen C."/>
            <person name="Skala J."/>
            <person name="Soares H."/>
            <person name="Sor F."/>
            <person name="Stegemann J."/>
            <person name="Tettelin H."/>
            <person name="Thierry A."/>
            <person name="Tzermia M."/>
            <person name="Urrestarazu L.A."/>
            <person name="van Dyck L."/>
            <person name="van Vliet-Reedijk J.C."/>
            <person name="Valens M."/>
            <person name="Vandenbol M."/>
            <person name="Vilela C."/>
            <person name="Vissers S."/>
            <person name="von Wettstein D."/>
            <person name="Voss H."/>
            <person name="Wiemann S."/>
            <person name="Xu G."/>
            <person name="Zimmermann J."/>
            <person name="Haasemann M."/>
            <person name="Becker I."/>
            <person name="Mewes H.-W."/>
        </authorList>
    </citation>
    <scope>NUCLEOTIDE SEQUENCE [LARGE SCALE GENOMIC DNA]</scope>
    <source>
        <strain>ATCC 204508 / S288c</strain>
    </source>
</reference>
<reference key="2">
    <citation type="journal article" date="2014" name="G3 (Bethesda)">
        <title>The reference genome sequence of Saccharomyces cerevisiae: Then and now.</title>
        <authorList>
            <person name="Engel S.R."/>
            <person name="Dietrich F.S."/>
            <person name="Fisk D.G."/>
            <person name="Binkley G."/>
            <person name="Balakrishnan R."/>
            <person name="Costanzo M.C."/>
            <person name="Dwight S.S."/>
            <person name="Hitz B.C."/>
            <person name="Karra K."/>
            <person name="Nash R.S."/>
            <person name="Weng S."/>
            <person name="Wong E.D."/>
            <person name="Lloyd P."/>
            <person name="Skrzypek M.S."/>
            <person name="Miyasato S.R."/>
            <person name="Simison M."/>
            <person name="Cherry J.M."/>
        </authorList>
    </citation>
    <scope>GENOME REANNOTATION</scope>
    <source>
        <strain>ATCC 204508 / S288c</strain>
    </source>
</reference>
<reference key="3">
    <citation type="journal article" date="2007" name="Genome Res.">
        <title>Approaching a complete repository of sequence-verified protein-encoding clones for Saccharomyces cerevisiae.</title>
        <authorList>
            <person name="Hu Y."/>
            <person name="Rolfs A."/>
            <person name="Bhullar B."/>
            <person name="Murthy T.V.S."/>
            <person name="Zhu C."/>
            <person name="Berger M.F."/>
            <person name="Camargo A.A."/>
            <person name="Kelley F."/>
            <person name="McCarron S."/>
            <person name="Jepson D."/>
            <person name="Richardson A."/>
            <person name="Raphael J."/>
            <person name="Moreira D."/>
            <person name="Taycher E."/>
            <person name="Zuo D."/>
            <person name="Mohr S."/>
            <person name="Kane M.F."/>
            <person name="Williamson J."/>
            <person name="Simpson A.J.G."/>
            <person name="Bulyk M.L."/>
            <person name="Harlow E."/>
            <person name="Marsischky G."/>
            <person name="Kolodner R.D."/>
            <person name="LaBaer J."/>
        </authorList>
    </citation>
    <scope>NUCLEOTIDE SEQUENCE [GENOMIC DNA]</scope>
    <source>
        <strain>ATCC 204508 / S288c</strain>
    </source>
</reference>
<reference key="4">
    <citation type="journal article" date="2003" name="Nature">
        <title>Global analysis of protein expression in yeast.</title>
        <authorList>
            <person name="Ghaemmaghami S."/>
            <person name="Huh W.-K."/>
            <person name="Bower K."/>
            <person name="Howson R.W."/>
            <person name="Belle A."/>
            <person name="Dephoure N."/>
            <person name="O'Shea E.K."/>
            <person name="Weissman J.S."/>
        </authorList>
    </citation>
    <scope>LEVEL OF PROTEIN EXPRESSION [LARGE SCALE ANALYSIS]</scope>
</reference>
<reference key="5">
    <citation type="journal article" date="2006" name="Proc. Natl. Acad. Sci. U.S.A.">
        <title>A global topology map of the Saccharomyces cerevisiae membrane proteome.</title>
        <authorList>
            <person name="Kim H."/>
            <person name="Melen K."/>
            <person name="Oesterberg M."/>
            <person name="von Heijne G."/>
        </authorList>
    </citation>
    <scope>TOPOLOGY [LARGE SCALE ANALYSIS]</scope>
    <source>
        <strain>ATCC 208353 / W303-1A</strain>
    </source>
</reference>
<organism>
    <name type="scientific">Saccharomyces cerevisiae (strain ATCC 204508 / S288c)</name>
    <name type="common">Baker's yeast</name>
    <dbReference type="NCBI Taxonomy" id="559292"/>
    <lineage>
        <taxon>Eukaryota</taxon>
        <taxon>Fungi</taxon>
        <taxon>Dikarya</taxon>
        <taxon>Ascomycota</taxon>
        <taxon>Saccharomycotina</taxon>
        <taxon>Saccharomycetes</taxon>
        <taxon>Saccharomycetales</taxon>
        <taxon>Saccharomycetaceae</taxon>
        <taxon>Saccharomyces</taxon>
    </lineage>
</organism>
<accession>P36137</accession>
<accession>D6VXA6</accession>
<protein>
    <recommendedName>
        <fullName>Protein UIP5</fullName>
    </recommendedName>
    <alternativeName>
        <fullName>ULP1-interacting protein 5</fullName>
    </alternativeName>
</protein>
<proteinExistence type="evidence at protein level"/>